<feature type="chain" id="PRO_0000080795" description="Putative phosphate permease TC_0064">
    <location>
        <begin position="1"/>
        <end position="426"/>
    </location>
</feature>
<feature type="transmembrane region" description="Helical" evidence="1">
    <location>
        <begin position="1"/>
        <end position="21"/>
    </location>
</feature>
<feature type="transmembrane region" description="Helical" evidence="1">
    <location>
        <begin position="37"/>
        <end position="57"/>
    </location>
</feature>
<feature type="transmembrane region" description="Helical" evidence="1">
    <location>
        <begin position="83"/>
        <end position="103"/>
    </location>
</feature>
<feature type="transmembrane region" description="Helical" evidence="1">
    <location>
        <begin position="104"/>
        <end position="124"/>
    </location>
</feature>
<feature type="transmembrane region" description="Helical" evidence="1">
    <location>
        <begin position="140"/>
        <end position="160"/>
    </location>
</feature>
<feature type="transmembrane region" description="Helical" evidence="1">
    <location>
        <begin position="183"/>
        <end position="203"/>
    </location>
</feature>
<feature type="transmembrane region" description="Helical" evidence="1">
    <location>
        <begin position="207"/>
        <end position="227"/>
    </location>
</feature>
<feature type="transmembrane region" description="Helical" evidence="1">
    <location>
        <begin position="260"/>
        <end position="280"/>
    </location>
</feature>
<feature type="transmembrane region" description="Helical" evidence="1">
    <location>
        <begin position="309"/>
        <end position="329"/>
    </location>
</feature>
<feature type="transmembrane region" description="Helical" evidence="1">
    <location>
        <begin position="365"/>
        <end position="385"/>
    </location>
</feature>
<feature type="transmembrane region" description="Helical" evidence="1">
    <location>
        <begin position="399"/>
        <end position="419"/>
    </location>
</feature>
<protein>
    <recommendedName>
        <fullName>Putative phosphate permease TC_0064</fullName>
    </recommendedName>
</protein>
<proteinExistence type="inferred from homology"/>
<comment type="function">
    <text>Potential transporter for phosphate.</text>
</comment>
<comment type="subcellular location">
    <subcellularLocation>
        <location evidence="2">Cell membrane</location>
        <topology evidence="2">Multi-pass membrane protein</topology>
    </subcellularLocation>
</comment>
<comment type="similarity">
    <text evidence="2">Belongs to the inorganic phosphate transporter (PiT) (TC 2.A.20) family.</text>
</comment>
<gene>
    <name type="ordered locus">TC_0064</name>
</gene>
<accession>Q9PLN5</accession>
<name>Y064_CHLMU</name>
<keyword id="KW-1003">Cell membrane</keyword>
<keyword id="KW-0472">Membrane</keyword>
<keyword id="KW-0592">Phosphate transport</keyword>
<keyword id="KW-0812">Transmembrane</keyword>
<keyword id="KW-1133">Transmembrane helix</keyword>
<keyword id="KW-0813">Transport</keyword>
<sequence>MWWLLVCVVIGGFYTAWNIGANDVANAVGPSVGAGVLTLRQAVLIAAVFEFLGAVVLGDRVIGTIESGLVAPADHVLSSQDYVFGMTAALFATGVWLQIASFFGWPVSTTHAIVGGVLGFGIILKEDAVIYWDSCARIFVSWLASPIIGGYFAFLIFSFIRKAILYKRDPVSAMVRIAPFLSAIIIFALGLILILSGAVARVVAFPVAFRVVCGLVVFAFAFTIWGVHFFKLAVLPQKVGPGTLLDRLLSKSTDYGRQYLVVERIFAYLQIVIACFMSFAHGSNDVANAIAPVAGIYRALYPQSYSPKVLFIFMSLGGLGLVFGLATWGWRVIDTIGKKITELTPSRGFSVGMSSAITIAAASAFGFPISTTHVVVGAVLGVGLARGLQAINLRIIKDIVLSWFVTVPAGAALSIMFFLLLRAVFC</sequence>
<evidence type="ECO:0000255" key="1"/>
<evidence type="ECO:0000305" key="2"/>
<reference key="1">
    <citation type="journal article" date="2000" name="Nucleic Acids Res.">
        <title>Genome sequences of Chlamydia trachomatis MoPn and Chlamydia pneumoniae AR39.</title>
        <authorList>
            <person name="Read T.D."/>
            <person name="Brunham R.C."/>
            <person name="Shen C."/>
            <person name="Gill S.R."/>
            <person name="Heidelberg J.F."/>
            <person name="White O."/>
            <person name="Hickey E.K."/>
            <person name="Peterson J.D."/>
            <person name="Utterback T.R."/>
            <person name="Berry K.J."/>
            <person name="Bass S."/>
            <person name="Linher K.D."/>
            <person name="Weidman J.F."/>
            <person name="Khouri H.M."/>
            <person name="Craven B."/>
            <person name="Bowman C."/>
            <person name="Dodson R.J."/>
            <person name="Gwinn M.L."/>
            <person name="Nelson W.C."/>
            <person name="DeBoy R.T."/>
            <person name="Kolonay J.F."/>
            <person name="McClarty G."/>
            <person name="Salzberg S.L."/>
            <person name="Eisen J.A."/>
            <person name="Fraser C.M."/>
        </authorList>
    </citation>
    <scope>NUCLEOTIDE SEQUENCE [LARGE SCALE GENOMIC DNA]</scope>
    <source>
        <strain>MoPn / Nigg</strain>
    </source>
</reference>
<organism>
    <name type="scientific">Chlamydia muridarum (strain MoPn / Nigg)</name>
    <dbReference type="NCBI Taxonomy" id="243161"/>
    <lineage>
        <taxon>Bacteria</taxon>
        <taxon>Pseudomonadati</taxon>
        <taxon>Chlamydiota</taxon>
        <taxon>Chlamydiia</taxon>
        <taxon>Chlamydiales</taxon>
        <taxon>Chlamydiaceae</taxon>
        <taxon>Chlamydia/Chlamydophila group</taxon>
        <taxon>Chlamydia</taxon>
    </lineage>
</organism>
<dbReference type="EMBL" id="AE002160">
    <property type="protein sequence ID" value="AAF73527.1"/>
    <property type="molecule type" value="Genomic_DNA"/>
</dbReference>
<dbReference type="RefSeq" id="WP_010229264.1">
    <property type="nucleotide sequence ID" value="NZ_CP063055.1"/>
</dbReference>
<dbReference type="SMR" id="Q9PLN5"/>
<dbReference type="GeneID" id="1245593"/>
<dbReference type="KEGG" id="cmu:TC_0064"/>
<dbReference type="eggNOG" id="COG0306">
    <property type="taxonomic scope" value="Bacteria"/>
</dbReference>
<dbReference type="HOGENOM" id="CLU_015355_3_3_0"/>
<dbReference type="OrthoDB" id="19855at2"/>
<dbReference type="Proteomes" id="UP000000800">
    <property type="component" value="Chromosome"/>
</dbReference>
<dbReference type="GO" id="GO:0005886">
    <property type="term" value="C:plasma membrane"/>
    <property type="evidence" value="ECO:0007669"/>
    <property type="project" value="UniProtKB-SubCell"/>
</dbReference>
<dbReference type="GO" id="GO:0005315">
    <property type="term" value="F:phosphate transmembrane transporter activity"/>
    <property type="evidence" value="ECO:0007669"/>
    <property type="project" value="InterPro"/>
</dbReference>
<dbReference type="GO" id="GO:0035435">
    <property type="term" value="P:phosphate ion transmembrane transport"/>
    <property type="evidence" value="ECO:0007669"/>
    <property type="project" value="TreeGrafter"/>
</dbReference>
<dbReference type="InterPro" id="IPR001204">
    <property type="entry name" value="Phos_transporter"/>
</dbReference>
<dbReference type="PANTHER" id="PTHR11101">
    <property type="entry name" value="PHOSPHATE TRANSPORTER"/>
    <property type="match status" value="1"/>
</dbReference>
<dbReference type="PANTHER" id="PTHR11101:SF80">
    <property type="entry name" value="PHOSPHATE TRANSPORTER"/>
    <property type="match status" value="1"/>
</dbReference>
<dbReference type="Pfam" id="PF01384">
    <property type="entry name" value="PHO4"/>
    <property type="match status" value="1"/>
</dbReference>